<dbReference type="EC" id="2.3.2.27"/>
<dbReference type="EMBL" id="M59422">
    <property type="protein sequence ID" value="AAA46701.1"/>
    <property type="molecule type" value="Genomic_DNA"/>
</dbReference>
<dbReference type="EMBL" id="L22858">
    <property type="protein sequence ID" value="AAA66781.1"/>
    <property type="molecule type" value="Genomic_DNA"/>
</dbReference>
<dbReference type="PIR" id="A39150">
    <property type="entry name" value="WMNVIA"/>
</dbReference>
<dbReference type="PIR" id="A72869">
    <property type="entry name" value="A72869"/>
</dbReference>
<dbReference type="SMR" id="P24647"/>
<dbReference type="KEGG" id="vg:1403984"/>
<dbReference type="OrthoDB" id="13124at10239"/>
<dbReference type="Proteomes" id="UP000008292">
    <property type="component" value="Segment"/>
</dbReference>
<dbReference type="GO" id="GO:0042025">
    <property type="term" value="C:host cell nucleus"/>
    <property type="evidence" value="ECO:0000314"/>
    <property type="project" value="UniProtKB"/>
</dbReference>
<dbReference type="GO" id="GO:0003677">
    <property type="term" value="F:DNA binding"/>
    <property type="evidence" value="ECO:0007669"/>
    <property type="project" value="UniProtKB-KW"/>
</dbReference>
<dbReference type="GO" id="GO:0016740">
    <property type="term" value="F:transferase activity"/>
    <property type="evidence" value="ECO:0007669"/>
    <property type="project" value="UniProtKB-KW"/>
</dbReference>
<dbReference type="GO" id="GO:0008270">
    <property type="term" value="F:zinc ion binding"/>
    <property type="evidence" value="ECO:0007669"/>
    <property type="project" value="UniProtKB-KW"/>
</dbReference>
<dbReference type="GO" id="GO:0046782">
    <property type="term" value="P:regulation of viral transcription"/>
    <property type="evidence" value="ECO:0000314"/>
    <property type="project" value="UniProtKB"/>
</dbReference>
<dbReference type="GO" id="GO:0039648">
    <property type="term" value="P:symbiont-mediated perturbation of host ubiquitin-like protein modification"/>
    <property type="evidence" value="ECO:0007669"/>
    <property type="project" value="UniProtKB-KW"/>
</dbReference>
<dbReference type="InterPro" id="IPR001841">
    <property type="entry name" value="Znf_RING"/>
</dbReference>
<dbReference type="InterPro" id="IPR017907">
    <property type="entry name" value="Znf_RING_CS"/>
</dbReference>
<dbReference type="SUPFAM" id="SSF57850">
    <property type="entry name" value="RING/U-box"/>
    <property type="match status" value="1"/>
</dbReference>
<dbReference type="PROSITE" id="PS00518">
    <property type="entry name" value="ZF_RING_1"/>
    <property type="match status" value="1"/>
</dbReference>
<dbReference type="PROSITE" id="PS50089">
    <property type="entry name" value="ZF_RING_2"/>
    <property type="match status" value="1"/>
</dbReference>
<accession>P24647</accession>
<keyword id="KW-0010">Activator</keyword>
<keyword id="KW-0238">DNA-binding</keyword>
<keyword id="KW-0244">Early protein</keyword>
<keyword id="KW-1048">Host nucleus</keyword>
<keyword id="KW-0945">Host-virus interaction</keyword>
<keyword id="KW-0479">Metal-binding</keyword>
<keyword id="KW-1128">Modulation of host ubiquitin pathway by viral E3 ligase</keyword>
<keyword id="KW-1130">Modulation of host ubiquitin pathway by virus</keyword>
<keyword id="KW-1185">Reference proteome</keyword>
<keyword id="KW-0677">Repeat</keyword>
<keyword id="KW-0804">Transcription</keyword>
<keyword id="KW-0805">Transcription regulation</keyword>
<keyword id="KW-0808">Transferase</keyword>
<keyword id="KW-0832">Ubl conjugation</keyword>
<keyword id="KW-0833">Ubl conjugation pathway</keyword>
<keyword id="KW-0862">Zinc</keyword>
<keyword id="KW-0863">Zinc-finger</keyword>
<reference key="1">
    <citation type="journal article" date="1991" name="Virology">
        <title>Molecular analysis of a baculovirus regulatory gene.</title>
        <authorList>
            <person name="Carson D.D."/>
            <person name="Summers M.D."/>
            <person name="Guarino L.A."/>
        </authorList>
    </citation>
    <scope>NUCLEOTIDE SEQUENCE [GENOMIC DNA]</scope>
    <source>
        <strain>E2</strain>
    </source>
</reference>
<reference key="2">
    <citation type="journal article" date="1994" name="Virology">
        <title>The complete DNA sequence of Autographa californica nuclear polyhedrosis virus.</title>
        <authorList>
            <person name="Ayres M.D."/>
            <person name="Howard S.C."/>
            <person name="Kuzio J."/>
            <person name="Lopez-Ferber M."/>
            <person name="Possee R.D."/>
        </authorList>
    </citation>
    <scope>NUCLEOTIDE SEQUENCE [LARGE SCALE GENOMIC DNA]</scope>
    <source>
        <strain>C6</strain>
    </source>
</reference>
<reference key="3">
    <citation type="journal article" date="1994" name="Virology">
        <title>Functional dissection of the ie2 gene product of the baculovirus Autographa californica nuclear polyhedrosis virus.</title>
        <authorList>
            <person name="Yoo S."/>
            <person name="Guarino L.A."/>
        </authorList>
    </citation>
    <scope>SUBCELLULAR LOCATION</scope>
    <scope>FUNCTION</scope>
</reference>
<reference key="4">
    <citation type="journal article" date="2001" name="Exp. Cell Res.">
        <title>Dynamic nuclear localization of the baculovirus proteins IE2 and PE38 during the infection cycle: the promyelocytic leukemia protein colocalizes with IE2.</title>
        <authorList>
            <person name="Murges D."/>
            <person name="Quadt I."/>
            <person name="Schroeer J."/>
            <person name="Knebel-Moersdorf D."/>
        </authorList>
    </citation>
    <scope>SUBCELLULAR LOCATION</scope>
</reference>
<reference key="5">
    <citation type="journal article" date="2002" name="J. Virol.">
        <title>Nuclear IE2 structures are related to viral DNA replication sites during baculovirus infection.</title>
        <authorList>
            <person name="Mainz D."/>
            <person name="Quadt I."/>
            <person name="Knebel-Moersdorf D."/>
        </authorList>
    </citation>
    <scope>FUNCTION</scope>
    <scope>SUBCELLULAR LOCATION</scope>
</reference>
<comment type="function">
    <text evidence="1 5 6">RING-finger E3 ubiquitin ligase that plays an important regulatory role during the initial stages of infection. Migrates to specific nuclear foci early in infection supposely to prepare the sites for viral transcription and replication by targeting and ubiquitinating host proteins. Acts as a transcriptional activator and activates a number of viral promoters including itself, IE1 and the promoter of 39K gene.</text>
</comment>
<comment type="catalytic activity">
    <reaction>
        <text>S-ubiquitinyl-[E2 ubiquitin-conjugating enzyme]-L-cysteine + [acceptor protein]-L-lysine = [E2 ubiquitin-conjugating enzyme]-L-cysteine + N(6)-ubiquitinyl-[acceptor protein]-L-lysine.</text>
        <dbReference type="EC" id="2.3.2.27"/>
    </reaction>
</comment>
<comment type="subunit">
    <text evidence="1">Homooligomer.</text>
</comment>
<comment type="subcellular location">
    <subcellularLocation>
        <location evidence="4 5 6">Host nucleus</location>
    </subcellularLocation>
</comment>
<comment type="PTM">
    <text evidence="1">Auto-ubiquitinated.</text>
</comment>
<comment type="similarity">
    <text evidence="7">Belongs to the alphabaculovirus IE2 protein family.</text>
</comment>
<organismHost>
    <name type="scientific">Lepidoptera</name>
    <name type="common">butterflies and moths</name>
    <dbReference type="NCBI Taxonomy" id="7088"/>
</organismHost>
<proteinExistence type="inferred from homology"/>
<gene>
    <name type="primary">IE2</name>
    <name type="ORF">ORF151</name>
</gene>
<evidence type="ECO:0000250" key="1">
    <source>
        <dbReference type="UniProtKB" id="O92503"/>
    </source>
</evidence>
<evidence type="ECO:0000255" key="2">
    <source>
        <dbReference type="PROSITE-ProRule" id="PRU00175"/>
    </source>
</evidence>
<evidence type="ECO:0000256" key="3">
    <source>
        <dbReference type="SAM" id="MobiDB-lite"/>
    </source>
</evidence>
<evidence type="ECO:0000269" key="4">
    <source>
    </source>
</evidence>
<evidence type="ECO:0000269" key="5">
    <source>
    </source>
</evidence>
<evidence type="ECO:0000269" key="6">
    <source>
    </source>
</evidence>
<evidence type="ECO:0000305" key="7"/>
<sequence length="408" mass="47007">MSRQINAATPSSSRRHRLSLSRRRINFTTSPEAQPSSSSRSQPSSSSRSHRRQERRQEQRVSEENVQIIGNVNEPLTRTYHRQGVTYYVHGQVNISNDDPLLSQEDDVILINSENVDRERFPDITAQQYQDNIASETAAQRALQRGLDLEAQLMNEIAPRSPTYSPSYSPNYVIPQSPDLFASPQSPQPQQQQQQQSEPEEEVEVSCNICFTTFKDTKNVNSSFVTSIHCNHAVCFKCYVKIIMDNSVYKCFCSATSSDCRVYNKHGYVEFMPINVTRNQDSIKQHWRELLENNTVNNHTTDLNYVEQLQKELSELRAKTSQVEHKMTMLNSDYIMLKHKHAVAELDLQKANYDLQESTKKSEELQSTVNNLQEQLRKQVAESQAKFSEFERSNSDLVSKLQTVMSRR</sequence>
<organism>
    <name type="scientific">Autographa californica nuclear polyhedrosis virus</name>
    <name type="common">AcMNPV</name>
    <dbReference type="NCBI Taxonomy" id="46015"/>
    <lineage>
        <taxon>Viruses</taxon>
        <taxon>Viruses incertae sedis</taxon>
        <taxon>Naldaviricetes</taxon>
        <taxon>Lefavirales</taxon>
        <taxon>Baculoviridae</taxon>
        <taxon>Alphabaculovirus</taxon>
        <taxon>Alphabaculovirus aucalifornicae</taxon>
    </lineage>
</organism>
<name>IE2_NPVAC</name>
<protein>
    <recommendedName>
        <fullName>E3 ubiquitin-protein ligase IE2</fullName>
        <ecNumber>2.3.2.27</ecNumber>
    </recommendedName>
    <alternativeName>
        <fullName>Immediate-early protein IE2</fullName>
    </alternativeName>
    <alternativeName>
        <fullName evidence="7">RING-type E3 ubiquitin transferase IE2</fullName>
    </alternativeName>
</protein>
<feature type="chain" id="PRO_0000056350" description="E3 ubiquitin-protein ligase IE2">
    <location>
        <begin position="1"/>
        <end position="408"/>
    </location>
</feature>
<feature type="repeat" description="1-1">
    <location>
        <begin position="34"/>
        <end position="41"/>
    </location>
</feature>
<feature type="repeat" description="1-2">
    <location>
        <begin position="42"/>
        <end position="49"/>
    </location>
</feature>
<feature type="repeat" description="2-1">
    <location>
        <begin position="51"/>
        <end position="54"/>
    </location>
</feature>
<feature type="repeat" description="2-2">
    <location>
        <begin position="55"/>
        <end position="58"/>
    </location>
</feature>
<feature type="zinc finger region" description="RING-type" evidence="2">
    <location>
        <begin position="207"/>
        <end position="255"/>
    </location>
</feature>
<feature type="region of interest" description="Disordered" evidence="3">
    <location>
        <begin position="1"/>
        <end position="67"/>
    </location>
</feature>
<feature type="region of interest" description="2 X 8 AA tandem repeats of Q-P-S-S-S-S-R-S">
    <location>
        <begin position="34"/>
        <end position="49"/>
    </location>
</feature>
<feature type="region of interest" description="2 X 4 AA tandem repeats of R-R-Q-E">
    <location>
        <begin position="51"/>
        <end position="58"/>
    </location>
</feature>
<feature type="region of interest" description="Disordered" evidence="3">
    <location>
        <begin position="176"/>
        <end position="199"/>
    </location>
</feature>
<feature type="compositionally biased region" description="Polar residues" evidence="3">
    <location>
        <begin position="1"/>
        <end position="10"/>
    </location>
</feature>
<feature type="compositionally biased region" description="Basic residues" evidence="3">
    <location>
        <begin position="13"/>
        <end position="25"/>
    </location>
</feature>
<feature type="compositionally biased region" description="Low complexity" evidence="3">
    <location>
        <begin position="30"/>
        <end position="47"/>
    </location>
</feature>
<feature type="compositionally biased region" description="Low complexity" evidence="3">
    <location>
        <begin position="183"/>
        <end position="197"/>
    </location>
</feature>
<feature type="sequence conflict" description="In Ref. 1; AAA46701." evidence="7" ref="1">
    <original>A</original>
    <variation>R</variation>
    <location>
        <position position="138"/>
    </location>
</feature>